<accession>Q6DB93</accession>
<organism>
    <name type="scientific">Pectobacterium atrosepticum (strain SCRI 1043 / ATCC BAA-672)</name>
    <name type="common">Erwinia carotovora subsp. atroseptica</name>
    <dbReference type="NCBI Taxonomy" id="218491"/>
    <lineage>
        <taxon>Bacteria</taxon>
        <taxon>Pseudomonadati</taxon>
        <taxon>Pseudomonadota</taxon>
        <taxon>Gammaproteobacteria</taxon>
        <taxon>Enterobacterales</taxon>
        <taxon>Pectobacteriaceae</taxon>
        <taxon>Pectobacterium</taxon>
    </lineage>
</organism>
<comment type="function">
    <text evidence="1">Component of the RavA-ViaA chaperone complex, which may act on the membrane to optimize the function of some of the respiratory chains. RavA functions as an ATPase.</text>
</comment>
<comment type="catalytic activity">
    <reaction evidence="1">
        <text>ATP + H2O = ADP + phosphate + H(+)</text>
        <dbReference type="Rhea" id="RHEA:13065"/>
        <dbReference type="ChEBI" id="CHEBI:15377"/>
        <dbReference type="ChEBI" id="CHEBI:15378"/>
        <dbReference type="ChEBI" id="CHEBI:30616"/>
        <dbReference type="ChEBI" id="CHEBI:43474"/>
        <dbReference type="ChEBI" id="CHEBI:456216"/>
    </reaction>
</comment>
<comment type="activity regulation">
    <text evidence="1">ATPase activity is stimulated by ViaA.</text>
</comment>
<comment type="subunit">
    <text evidence="1">Homohexamer. Interacts with ViaA.</text>
</comment>
<comment type="subcellular location">
    <subcellularLocation>
        <location evidence="1">Cytoplasm</location>
    </subcellularLocation>
</comment>
<comment type="similarity">
    <text evidence="1">Belongs to the RavA family.</text>
</comment>
<reference key="1">
    <citation type="journal article" date="2004" name="Proc. Natl. Acad. Sci. U.S.A.">
        <title>Genome sequence of the enterobacterial phytopathogen Erwinia carotovora subsp. atroseptica and characterization of virulence factors.</title>
        <authorList>
            <person name="Bell K.S."/>
            <person name="Sebaihia M."/>
            <person name="Pritchard L."/>
            <person name="Holden M.T.G."/>
            <person name="Hyman L.J."/>
            <person name="Holeva M.C."/>
            <person name="Thomson N.R."/>
            <person name="Bentley S.D."/>
            <person name="Churcher L.J.C."/>
            <person name="Mungall K."/>
            <person name="Atkin R."/>
            <person name="Bason N."/>
            <person name="Brooks K."/>
            <person name="Chillingworth T."/>
            <person name="Clark K."/>
            <person name="Doggett J."/>
            <person name="Fraser A."/>
            <person name="Hance Z."/>
            <person name="Hauser H."/>
            <person name="Jagels K."/>
            <person name="Moule S."/>
            <person name="Norbertczak H."/>
            <person name="Ormond D."/>
            <person name="Price C."/>
            <person name="Quail M.A."/>
            <person name="Sanders M."/>
            <person name="Walker D."/>
            <person name="Whitehead S."/>
            <person name="Salmond G.P.C."/>
            <person name="Birch P.R.J."/>
            <person name="Parkhill J."/>
            <person name="Toth I.K."/>
        </authorList>
    </citation>
    <scope>NUCLEOTIDE SEQUENCE [LARGE SCALE GENOMIC DNA]</scope>
    <source>
        <strain>SCRI 1043 / ATCC BAA-672</strain>
    </source>
</reference>
<feature type="chain" id="PRO_0000209369" description="Regulatory ATPase RavA">
    <location>
        <begin position="1"/>
        <end position="499"/>
    </location>
</feature>
<feature type="binding site" evidence="1">
    <location>
        <position position="23"/>
    </location>
    <ligand>
        <name>ADP</name>
        <dbReference type="ChEBI" id="CHEBI:456216"/>
    </ligand>
</feature>
<feature type="binding site" evidence="1">
    <location>
        <position position="49"/>
    </location>
    <ligand>
        <name>ADP</name>
        <dbReference type="ChEBI" id="CHEBI:456216"/>
    </ligand>
</feature>
<feature type="binding site" evidence="1">
    <location>
        <position position="50"/>
    </location>
    <ligand>
        <name>ADP</name>
        <dbReference type="ChEBI" id="CHEBI:456216"/>
    </ligand>
</feature>
<feature type="binding site" evidence="1">
    <location>
        <position position="51"/>
    </location>
    <ligand>
        <name>ADP</name>
        <dbReference type="ChEBI" id="CHEBI:456216"/>
    </ligand>
</feature>
<feature type="binding site" evidence="1">
    <location>
        <position position="52"/>
    </location>
    <ligand>
        <name>ADP</name>
        <dbReference type="ChEBI" id="CHEBI:456216"/>
    </ligand>
</feature>
<feature type="binding site" evidence="1">
    <location>
        <position position="53"/>
    </location>
    <ligand>
        <name>ADP</name>
        <dbReference type="ChEBI" id="CHEBI:456216"/>
    </ligand>
</feature>
<feature type="binding site" evidence="1">
    <location>
        <position position="54"/>
    </location>
    <ligand>
        <name>ADP</name>
        <dbReference type="ChEBI" id="CHEBI:456216"/>
    </ligand>
</feature>
<feature type="binding site" evidence="1">
    <location>
        <position position="196"/>
    </location>
    <ligand>
        <name>ADP</name>
        <dbReference type="ChEBI" id="CHEBI:456216"/>
    </ligand>
</feature>
<evidence type="ECO:0000255" key="1">
    <source>
        <dbReference type="HAMAP-Rule" id="MF_01625"/>
    </source>
</evidence>
<sequence>MRQTAALAERISRLSHALEHGLYERQHTIRLCLLAALSGESVFLLGPPGIAKSMIARRLKFAFRHANAFEYLMTRFSTPEEVFGPLSIQALKDEGRYQRLTAGYLPEAEIVFLDEIWKAGPAILNTLLTAINERRFRNGNSEDTIPMRLLVAASNELPEADGGLEALYDRMLIRLWLDRVQEKQNFHALLVNNSSDRDNPVPPALSVSDEEYQQWQKDIEHVALPEVGFELIYMLRQQLDALEQAPYISDRRWKKALRLLQASAFFCGRDAITPVDIILLKDCLWHDQSTLTLIERQLELLITEHAYQQKSLLFRLQQVNTKRQQYQREQSELQAFSVEKQGHFLGRKFHYTLPDTIAAETLDLVLQRPLILHDIEVNHLTIEKNALQGWLQKGGEIRGKLNGIGFTQRLDLLVDDRQHLAIRDISLQSSVLSLPEKRDCALPAEITDEYEKLNMQLREQRRLFSQHQPCLFVPSEWLAKIEASLQQVAEQIQQSEQQD</sequence>
<name>RAVA_PECAS</name>
<protein>
    <recommendedName>
        <fullName evidence="1">Regulatory ATPase RavA</fullName>
        <ecNumber evidence="1">3.6.1.-</ecNumber>
    </recommendedName>
    <alternativeName>
        <fullName evidence="1">Regulatory ATPase variant A</fullName>
    </alternativeName>
</protein>
<dbReference type="EC" id="3.6.1.-" evidence="1"/>
<dbReference type="EMBL" id="BX950851">
    <property type="protein sequence ID" value="CAG72929.1"/>
    <property type="molecule type" value="Genomic_DNA"/>
</dbReference>
<dbReference type="RefSeq" id="WP_011091654.1">
    <property type="nucleotide sequence ID" value="NC_004547.2"/>
</dbReference>
<dbReference type="SMR" id="Q6DB93"/>
<dbReference type="STRING" id="218491.ECA0005"/>
<dbReference type="GeneID" id="57206859"/>
<dbReference type="KEGG" id="eca:ECA0005"/>
<dbReference type="PATRIC" id="fig|218491.5.peg.5"/>
<dbReference type="eggNOG" id="COG0714">
    <property type="taxonomic scope" value="Bacteria"/>
</dbReference>
<dbReference type="HOGENOM" id="CLU_018678_1_0_6"/>
<dbReference type="OrthoDB" id="1814213at2"/>
<dbReference type="Proteomes" id="UP000007966">
    <property type="component" value="Chromosome"/>
</dbReference>
<dbReference type="GO" id="GO:0005737">
    <property type="term" value="C:cytoplasm"/>
    <property type="evidence" value="ECO:0007669"/>
    <property type="project" value="UniProtKB-SubCell"/>
</dbReference>
<dbReference type="GO" id="GO:0005524">
    <property type="term" value="F:ATP binding"/>
    <property type="evidence" value="ECO:0007669"/>
    <property type="project" value="UniProtKB-KW"/>
</dbReference>
<dbReference type="GO" id="GO:0016887">
    <property type="term" value="F:ATP hydrolysis activity"/>
    <property type="evidence" value="ECO:0007669"/>
    <property type="project" value="UniProtKB-UniRule"/>
</dbReference>
<dbReference type="CDD" id="cd00009">
    <property type="entry name" value="AAA"/>
    <property type="match status" value="1"/>
</dbReference>
<dbReference type="Gene3D" id="1.20.58.1510">
    <property type="match status" value="1"/>
</dbReference>
<dbReference type="Gene3D" id="2.40.128.430">
    <property type="match status" value="1"/>
</dbReference>
<dbReference type="Gene3D" id="3.40.50.300">
    <property type="entry name" value="P-loop containing nucleotide triphosphate hydrolases"/>
    <property type="match status" value="1"/>
</dbReference>
<dbReference type="HAMAP" id="MF_01625">
    <property type="entry name" value="ATPase_RavA"/>
    <property type="match status" value="1"/>
</dbReference>
<dbReference type="InterPro" id="IPR003593">
    <property type="entry name" value="AAA+_ATPase"/>
</dbReference>
<dbReference type="InterPro" id="IPR023671">
    <property type="entry name" value="ATPase_RavA"/>
</dbReference>
<dbReference type="InterPro" id="IPR022547">
    <property type="entry name" value="ATPase_RavA_C"/>
</dbReference>
<dbReference type="InterPro" id="IPR045427">
    <property type="entry name" value="MoxR"/>
</dbReference>
<dbReference type="InterPro" id="IPR027417">
    <property type="entry name" value="P-loop_NTPase"/>
</dbReference>
<dbReference type="InterPro" id="IPR041538">
    <property type="entry name" value="RavA-like_AAA_lid"/>
</dbReference>
<dbReference type="InterPro" id="IPR050513">
    <property type="entry name" value="RavA_ATPases"/>
</dbReference>
<dbReference type="InterPro" id="IPR046898">
    <property type="entry name" value="RavA_LARA_dom"/>
</dbReference>
<dbReference type="InterPro" id="IPR046932">
    <property type="entry name" value="RavA_LARA_sf"/>
</dbReference>
<dbReference type="NCBIfam" id="NF010054">
    <property type="entry name" value="PRK13531.1"/>
    <property type="match status" value="1"/>
</dbReference>
<dbReference type="PANTHER" id="PTHR32204">
    <property type="entry name" value="ATPASE RAVA"/>
    <property type="match status" value="1"/>
</dbReference>
<dbReference type="PANTHER" id="PTHR32204:SF0">
    <property type="entry name" value="ATPASE RAVA"/>
    <property type="match status" value="1"/>
</dbReference>
<dbReference type="Pfam" id="PF17868">
    <property type="entry name" value="AAA_lid_8"/>
    <property type="match status" value="1"/>
</dbReference>
<dbReference type="Pfam" id="PF12592">
    <property type="entry name" value="ATPase_RavA_C"/>
    <property type="match status" value="1"/>
</dbReference>
<dbReference type="Pfam" id="PF20030">
    <property type="entry name" value="bpMoxR"/>
    <property type="match status" value="1"/>
</dbReference>
<dbReference type="Pfam" id="PF20265">
    <property type="entry name" value="LARA_dom"/>
    <property type="match status" value="1"/>
</dbReference>
<dbReference type="SMART" id="SM00382">
    <property type="entry name" value="AAA"/>
    <property type="match status" value="1"/>
</dbReference>
<dbReference type="SUPFAM" id="SSF52540">
    <property type="entry name" value="P-loop containing nucleoside triphosphate hydrolases"/>
    <property type="match status" value="1"/>
</dbReference>
<proteinExistence type="inferred from homology"/>
<gene>
    <name evidence="1" type="primary">ravA</name>
    <name type="ordered locus">ECA0005</name>
</gene>
<keyword id="KW-0067">ATP-binding</keyword>
<keyword id="KW-0143">Chaperone</keyword>
<keyword id="KW-0963">Cytoplasm</keyword>
<keyword id="KW-0378">Hydrolase</keyword>
<keyword id="KW-0547">Nucleotide-binding</keyword>
<keyword id="KW-1185">Reference proteome</keyword>